<organism>
    <name type="scientific">Idiomarina loihiensis (strain ATCC BAA-735 / DSM 15497 / L2-TR)</name>
    <dbReference type="NCBI Taxonomy" id="283942"/>
    <lineage>
        <taxon>Bacteria</taxon>
        <taxon>Pseudomonadati</taxon>
        <taxon>Pseudomonadota</taxon>
        <taxon>Gammaproteobacteria</taxon>
        <taxon>Alteromonadales</taxon>
        <taxon>Idiomarinaceae</taxon>
        <taxon>Idiomarina</taxon>
    </lineage>
</organism>
<accession>Q5QWY0</accession>
<proteinExistence type="inferred from homology"/>
<feature type="chain" id="PRO_0000264578" description="Phosphoribosylformylglycinamidine synthase">
    <location>
        <begin position="1"/>
        <end position="1295"/>
    </location>
</feature>
<feature type="domain" description="Glutamine amidotransferase type-1" evidence="1">
    <location>
        <begin position="1042"/>
        <end position="1295"/>
    </location>
</feature>
<feature type="active site" description="Nucleophile" evidence="1">
    <location>
        <position position="1135"/>
    </location>
</feature>
<feature type="active site" evidence="1">
    <location>
        <position position="1260"/>
    </location>
</feature>
<feature type="active site" evidence="1">
    <location>
        <position position="1262"/>
    </location>
</feature>
<feature type="binding site" evidence="1">
    <location>
        <begin position="305"/>
        <end position="316"/>
    </location>
    <ligand>
        <name>ATP</name>
        <dbReference type="ChEBI" id="CHEBI:30616"/>
    </ligand>
</feature>
<feature type="binding site" evidence="1">
    <location>
        <begin position="384"/>
        <end position="386"/>
    </location>
    <ligand>
        <name>ATP</name>
        <dbReference type="ChEBI" id="CHEBI:30616"/>
    </ligand>
</feature>
<feature type="binding site" evidence="1">
    <location>
        <position position="676"/>
    </location>
    <ligand>
        <name>ATP</name>
        <dbReference type="ChEBI" id="CHEBI:30616"/>
    </ligand>
</feature>
<feature type="binding site" evidence="1">
    <location>
        <position position="677"/>
    </location>
    <ligand>
        <name>Mg(2+)</name>
        <dbReference type="ChEBI" id="CHEBI:18420"/>
    </ligand>
</feature>
<feature type="binding site" evidence="1">
    <location>
        <position position="716"/>
    </location>
    <ligand>
        <name>Mg(2+)</name>
        <dbReference type="ChEBI" id="CHEBI:18420"/>
    </ligand>
</feature>
<feature type="binding site" evidence="1">
    <location>
        <position position="720"/>
    </location>
    <ligand>
        <name>Mg(2+)</name>
        <dbReference type="ChEBI" id="CHEBI:18420"/>
    </ligand>
</feature>
<feature type="binding site" evidence="1">
    <location>
        <position position="884"/>
    </location>
    <ligand>
        <name>Mg(2+)</name>
        <dbReference type="ChEBI" id="CHEBI:18420"/>
    </ligand>
</feature>
<feature type="binding site" evidence="1">
    <location>
        <position position="886"/>
    </location>
    <ligand>
        <name>ATP</name>
        <dbReference type="ChEBI" id="CHEBI:30616"/>
    </ligand>
</feature>
<reference key="1">
    <citation type="journal article" date="2004" name="Proc. Natl. Acad. Sci. U.S.A.">
        <title>Genome sequence of the deep-sea gamma-proteobacterium Idiomarina loihiensis reveals amino acid fermentation as a source of carbon and energy.</title>
        <authorList>
            <person name="Hou S."/>
            <person name="Saw J.H."/>
            <person name="Lee K.S."/>
            <person name="Freitas T.A."/>
            <person name="Belisle C."/>
            <person name="Kawarabayasi Y."/>
            <person name="Donachie S.P."/>
            <person name="Pikina A."/>
            <person name="Galperin M.Y."/>
            <person name="Koonin E.V."/>
            <person name="Makarova K.S."/>
            <person name="Omelchenko M.V."/>
            <person name="Sorokin A."/>
            <person name="Wolf Y.I."/>
            <person name="Li Q.X."/>
            <person name="Keum Y.S."/>
            <person name="Campbell S."/>
            <person name="Denery J."/>
            <person name="Aizawa S."/>
            <person name="Shibata S."/>
            <person name="Malahoff A."/>
            <person name="Alam M."/>
        </authorList>
    </citation>
    <scope>NUCLEOTIDE SEQUENCE [LARGE SCALE GENOMIC DNA]</scope>
    <source>
        <strain>ATCC BAA-735 / DSM 15497 / L2-TR</strain>
    </source>
</reference>
<name>PUR4_IDILO</name>
<gene>
    <name evidence="1" type="primary">purL</name>
    <name type="ordered locus">IL0591</name>
</gene>
<keyword id="KW-0067">ATP-binding</keyword>
<keyword id="KW-0963">Cytoplasm</keyword>
<keyword id="KW-0315">Glutamine amidotransferase</keyword>
<keyword id="KW-0436">Ligase</keyword>
<keyword id="KW-0460">Magnesium</keyword>
<keyword id="KW-0479">Metal-binding</keyword>
<keyword id="KW-0547">Nucleotide-binding</keyword>
<keyword id="KW-0658">Purine biosynthesis</keyword>
<keyword id="KW-1185">Reference proteome</keyword>
<protein>
    <recommendedName>
        <fullName evidence="1">Phosphoribosylformylglycinamidine synthase</fullName>
        <shortName evidence="1">FGAM synthase</shortName>
        <shortName evidence="1">FGAMS</shortName>
        <ecNumber evidence="1">6.3.5.3</ecNumber>
    </recommendedName>
    <alternativeName>
        <fullName evidence="1">Formylglycinamide ribonucleotide amidotransferase</fullName>
        <shortName evidence="1">FGAR amidotransferase</shortName>
        <shortName evidence="1">FGAR-AT</shortName>
    </alternativeName>
</protein>
<sequence length="1295" mass="142005">MEIYRGAPALSAFKTTKQLEQLKQAGIPVKELYAEYQHFVDLHNELSDEHRSVLVQLLKYGPEMPAHEPQGALVLVTPRIGTISPWASKATDIAHNCGLKSIHRVERGVAFYLQGDLSAEELKQAALLLHDRMTESVLYDMNDAQQLFRSQEPQPLSSVDILAGGREALAQANISLGLALADDEIDYLVENFRKLDRNPNDIELYMFAQANSEHCRHKIFNADWTIDGAEQPKSLFKMIKNTFETTPDYVLSAYKDNAAVMEGHEAGRFYPQPDSMSYGYSHEPVHILMKVETHNHPTAISPYPGAATGSGGEIRDEGATGVGSKPKAGLVGFSVSNLNIPGFKQPWEENYGKPARIVSALDIMLEGPLGGAAFNNEFGRPALTGYFRTYEQTVDSHNGRETRGYHKPIMIAGGLGNIREAHVQKGDIPVGAKLVVLGGPAMNIGLGGGAASSMASGESTEDLDFASVQRENPEMERRCQEVIDRCWQLGADNPIAFIHDVGAGGLSNAMPELVSDGGRGGRFELREIPNDEPGMTPLEIWCNESQERYVIAIAPENLARFEALCERERAEYAVIGEATEELTILLNDAKFSNQPIDLSLDVLLGKPPKMHRDVARLQTEGTPLHLEAADLNDAADRLLRLPAIAEKTFLITIGDRSVTGLVARDQMVGPWQIPVADVAVTASSYDSYHGEAMAMGERTPLALLNFGASARMAVAESLTNIAAADIGDLKRIKLSANWMCAAGHPGEDAGLYEAVKAVGEELCPELGITIPVGKDSMSMKTQWQQDGEDKAVTAPMSLVITAFGRVNDIRSTLTPQLRTDKGQSHLVLIDLGKGQNRLGGSALAQVYQQLGQHTPDLDDTETFKAFFNTTQQLVTEGRLLAYHDRSDGGLFTTVAEMAFAGNCGAKVALDELGEDNLATLFNEELGAVIQVSDEQYQKVMDAYKTAGLGDCVKRIGEPTHEDAIVFTRDEQNVLAQSRTHWRTVWAETTHHMQRLRDNPVCADEEFRLKQRADNPGLLADLTFDPSEDIAAPYIAKGVAPKVAILREQGVNSHYEMAAAFDRAGFEAVDVHMSDILAGRVSLEDMQALAACGGFSYGDVLGAGEGWAKSILFNDRAREQFEAFFKRNDTLALGVCNGCQMLSTLKQLIPGTEHWPRFVTNRSERFEARFSLVEVQESKSIFLGDMAGSRMPIAVSHGEGRAEFANPQQQSQLEQNSQVALRYIDNWGEVAEQYPANPNGSPKGITAVTSDDGRVTAMMPHPERVFRTVANSWHPDEWGEDSPWMRMFRNARKHLG</sequence>
<comment type="function">
    <text evidence="1">Phosphoribosylformylglycinamidine synthase involved in the purines biosynthetic pathway. Catalyzes the ATP-dependent conversion of formylglycinamide ribonucleotide (FGAR) and glutamine to yield formylglycinamidine ribonucleotide (FGAM) and glutamate.</text>
</comment>
<comment type="catalytic activity">
    <reaction evidence="1">
        <text>N(2)-formyl-N(1)-(5-phospho-beta-D-ribosyl)glycinamide + L-glutamine + ATP + H2O = 2-formamido-N(1)-(5-O-phospho-beta-D-ribosyl)acetamidine + L-glutamate + ADP + phosphate + H(+)</text>
        <dbReference type="Rhea" id="RHEA:17129"/>
        <dbReference type="ChEBI" id="CHEBI:15377"/>
        <dbReference type="ChEBI" id="CHEBI:15378"/>
        <dbReference type="ChEBI" id="CHEBI:29985"/>
        <dbReference type="ChEBI" id="CHEBI:30616"/>
        <dbReference type="ChEBI" id="CHEBI:43474"/>
        <dbReference type="ChEBI" id="CHEBI:58359"/>
        <dbReference type="ChEBI" id="CHEBI:147286"/>
        <dbReference type="ChEBI" id="CHEBI:147287"/>
        <dbReference type="ChEBI" id="CHEBI:456216"/>
        <dbReference type="EC" id="6.3.5.3"/>
    </reaction>
</comment>
<comment type="pathway">
    <text evidence="1">Purine metabolism; IMP biosynthesis via de novo pathway; 5-amino-1-(5-phospho-D-ribosyl)imidazole from N(2)-formyl-N(1)-(5-phospho-D-ribosyl)glycinamide: step 1/2.</text>
</comment>
<comment type="subunit">
    <text evidence="1">Monomer.</text>
</comment>
<comment type="subcellular location">
    <subcellularLocation>
        <location evidence="1">Cytoplasm</location>
    </subcellularLocation>
</comment>
<comment type="similarity">
    <text evidence="1">In the N-terminal section; belongs to the FGAMS family.</text>
</comment>
<dbReference type="EC" id="6.3.5.3" evidence="1"/>
<dbReference type="EMBL" id="AE017340">
    <property type="protein sequence ID" value="AAV81432.1"/>
    <property type="molecule type" value="Genomic_DNA"/>
</dbReference>
<dbReference type="RefSeq" id="WP_011233847.1">
    <property type="nucleotide sequence ID" value="NC_006512.1"/>
</dbReference>
<dbReference type="SMR" id="Q5QWY0"/>
<dbReference type="STRING" id="283942.IL0591"/>
<dbReference type="GeneID" id="41335742"/>
<dbReference type="KEGG" id="ilo:IL0591"/>
<dbReference type="eggNOG" id="COG0046">
    <property type="taxonomic scope" value="Bacteria"/>
</dbReference>
<dbReference type="eggNOG" id="COG0047">
    <property type="taxonomic scope" value="Bacteria"/>
</dbReference>
<dbReference type="HOGENOM" id="CLU_001031_0_2_6"/>
<dbReference type="OrthoDB" id="9804441at2"/>
<dbReference type="UniPathway" id="UPA00074">
    <property type="reaction ID" value="UER00128"/>
</dbReference>
<dbReference type="Proteomes" id="UP000001171">
    <property type="component" value="Chromosome"/>
</dbReference>
<dbReference type="GO" id="GO:0005737">
    <property type="term" value="C:cytoplasm"/>
    <property type="evidence" value="ECO:0007669"/>
    <property type="project" value="UniProtKB-SubCell"/>
</dbReference>
<dbReference type="GO" id="GO:0005524">
    <property type="term" value="F:ATP binding"/>
    <property type="evidence" value="ECO:0007669"/>
    <property type="project" value="UniProtKB-UniRule"/>
</dbReference>
<dbReference type="GO" id="GO:0046872">
    <property type="term" value="F:metal ion binding"/>
    <property type="evidence" value="ECO:0007669"/>
    <property type="project" value="UniProtKB-KW"/>
</dbReference>
<dbReference type="GO" id="GO:0004642">
    <property type="term" value="F:phosphoribosylformylglycinamidine synthase activity"/>
    <property type="evidence" value="ECO:0007669"/>
    <property type="project" value="UniProtKB-UniRule"/>
</dbReference>
<dbReference type="GO" id="GO:0006189">
    <property type="term" value="P:'de novo' IMP biosynthetic process"/>
    <property type="evidence" value="ECO:0007669"/>
    <property type="project" value="UniProtKB-UniRule"/>
</dbReference>
<dbReference type="CDD" id="cd01740">
    <property type="entry name" value="GATase1_FGAR_AT"/>
    <property type="match status" value="1"/>
</dbReference>
<dbReference type="CDD" id="cd02203">
    <property type="entry name" value="PurL_repeat1"/>
    <property type="match status" value="1"/>
</dbReference>
<dbReference type="CDD" id="cd02204">
    <property type="entry name" value="PurL_repeat2"/>
    <property type="match status" value="1"/>
</dbReference>
<dbReference type="FunFam" id="1.10.8.750:FF:000002">
    <property type="entry name" value="Phosphoribosylformylglycinamidine synthase"/>
    <property type="match status" value="1"/>
</dbReference>
<dbReference type="FunFam" id="3.30.1330.10:FF:000002">
    <property type="entry name" value="Phosphoribosylformylglycinamidine synthase"/>
    <property type="match status" value="1"/>
</dbReference>
<dbReference type="FunFam" id="3.30.1330.10:FF:000005">
    <property type="entry name" value="Phosphoribosylformylglycinamidine synthase"/>
    <property type="match status" value="1"/>
</dbReference>
<dbReference type="FunFam" id="3.40.50.880:FF:000008">
    <property type="entry name" value="Phosphoribosylformylglycinamidine synthase"/>
    <property type="match status" value="1"/>
</dbReference>
<dbReference type="FunFam" id="3.90.650.10:FF:000002">
    <property type="entry name" value="Phosphoribosylformylglycinamidine synthase"/>
    <property type="match status" value="1"/>
</dbReference>
<dbReference type="FunFam" id="3.90.650.10:FF:000005">
    <property type="entry name" value="Phosphoribosylformylglycinamidine synthase"/>
    <property type="match status" value="1"/>
</dbReference>
<dbReference type="Gene3D" id="3.40.50.880">
    <property type="match status" value="1"/>
</dbReference>
<dbReference type="Gene3D" id="1.10.8.750">
    <property type="entry name" value="Phosphoribosylformylglycinamidine synthase, linker domain"/>
    <property type="match status" value="1"/>
</dbReference>
<dbReference type="Gene3D" id="3.90.650.10">
    <property type="entry name" value="PurM-like C-terminal domain"/>
    <property type="match status" value="2"/>
</dbReference>
<dbReference type="Gene3D" id="3.30.1330.10">
    <property type="entry name" value="PurM-like, N-terminal domain"/>
    <property type="match status" value="2"/>
</dbReference>
<dbReference type="HAMAP" id="MF_00419">
    <property type="entry name" value="PurL_1"/>
    <property type="match status" value="1"/>
</dbReference>
<dbReference type="InterPro" id="IPR029062">
    <property type="entry name" value="Class_I_gatase-like"/>
</dbReference>
<dbReference type="InterPro" id="IPR040707">
    <property type="entry name" value="FGAR-AT_N"/>
</dbReference>
<dbReference type="InterPro" id="IPR055181">
    <property type="entry name" value="FGAR-AT_PurM_N-like"/>
</dbReference>
<dbReference type="InterPro" id="IPR010073">
    <property type="entry name" value="PurL_large"/>
</dbReference>
<dbReference type="InterPro" id="IPR041609">
    <property type="entry name" value="PurL_linker"/>
</dbReference>
<dbReference type="InterPro" id="IPR010918">
    <property type="entry name" value="PurM-like_C_dom"/>
</dbReference>
<dbReference type="InterPro" id="IPR036676">
    <property type="entry name" value="PurM-like_C_sf"/>
</dbReference>
<dbReference type="InterPro" id="IPR036921">
    <property type="entry name" value="PurM-like_N_sf"/>
</dbReference>
<dbReference type="InterPro" id="IPR036604">
    <property type="entry name" value="PurS-like_sf"/>
</dbReference>
<dbReference type="NCBIfam" id="TIGR01735">
    <property type="entry name" value="FGAM_synt"/>
    <property type="match status" value="1"/>
</dbReference>
<dbReference type="NCBIfam" id="NF003672">
    <property type="entry name" value="PRK05297.1"/>
    <property type="match status" value="1"/>
</dbReference>
<dbReference type="PANTHER" id="PTHR10099">
    <property type="entry name" value="PHOSPHORIBOSYLFORMYLGLYCINAMIDINE SYNTHASE"/>
    <property type="match status" value="1"/>
</dbReference>
<dbReference type="PANTHER" id="PTHR10099:SF1">
    <property type="entry name" value="PHOSPHORIBOSYLFORMYLGLYCINAMIDINE SYNTHASE"/>
    <property type="match status" value="1"/>
</dbReference>
<dbReference type="Pfam" id="PF02769">
    <property type="entry name" value="AIRS_C"/>
    <property type="match status" value="2"/>
</dbReference>
<dbReference type="Pfam" id="PF18072">
    <property type="entry name" value="FGAR-AT_linker"/>
    <property type="match status" value="1"/>
</dbReference>
<dbReference type="Pfam" id="PF18076">
    <property type="entry name" value="FGAR-AT_N"/>
    <property type="match status" value="1"/>
</dbReference>
<dbReference type="Pfam" id="PF22689">
    <property type="entry name" value="FGAR-AT_PurM_N-like"/>
    <property type="match status" value="1"/>
</dbReference>
<dbReference type="Pfam" id="PF13507">
    <property type="entry name" value="GATase_5"/>
    <property type="match status" value="1"/>
</dbReference>
<dbReference type="SMART" id="SM01211">
    <property type="entry name" value="GATase_5"/>
    <property type="match status" value="1"/>
</dbReference>
<dbReference type="SUPFAM" id="SSF52317">
    <property type="entry name" value="Class I glutamine amidotransferase-like"/>
    <property type="match status" value="1"/>
</dbReference>
<dbReference type="SUPFAM" id="SSF109736">
    <property type="entry name" value="FGAM synthase PurL, linker domain"/>
    <property type="match status" value="1"/>
</dbReference>
<dbReference type="SUPFAM" id="SSF56042">
    <property type="entry name" value="PurM C-terminal domain-like"/>
    <property type="match status" value="2"/>
</dbReference>
<dbReference type="SUPFAM" id="SSF55326">
    <property type="entry name" value="PurM N-terminal domain-like"/>
    <property type="match status" value="2"/>
</dbReference>
<dbReference type="SUPFAM" id="SSF82697">
    <property type="entry name" value="PurS-like"/>
    <property type="match status" value="1"/>
</dbReference>
<dbReference type="PROSITE" id="PS51273">
    <property type="entry name" value="GATASE_TYPE_1"/>
    <property type="match status" value="1"/>
</dbReference>
<evidence type="ECO:0000255" key="1">
    <source>
        <dbReference type="HAMAP-Rule" id="MF_00419"/>
    </source>
</evidence>